<name>GLGA_HYDCU</name>
<proteinExistence type="inferred from homology"/>
<evidence type="ECO:0000255" key="1">
    <source>
        <dbReference type="HAMAP-Rule" id="MF_00484"/>
    </source>
</evidence>
<gene>
    <name evidence="1" type="primary">glgA</name>
    <name type="ordered locus">Tcr_0512</name>
</gene>
<dbReference type="EC" id="2.4.1.21" evidence="1"/>
<dbReference type="EMBL" id="CP000109">
    <property type="protein sequence ID" value="ABB41108.1"/>
    <property type="molecule type" value="Genomic_DNA"/>
</dbReference>
<dbReference type="SMR" id="Q31IB5"/>
<dbReference type="STRING" id="317025.Tcr_0512"/>
<dbReference type="CAZy" id="GT5">
    <property type="family name" value="Glycosyltransferase Family 5"/>
</dbReference>
<dbReference type="KEGG" id="tcx:Tcr_0512"/>
<dbReference type="eggNOG" id="COG0297">
    <property type="taxonomic scope" value="Bacteria"/>
</dbReference>
<dbReference type="HOGENOM" id="CLU_009583_18_4_6"/>
<dbReference type="OrthoDB" id="9808590at2"/>
<dbReference type="UniPathway" id="UPA00164"/>
<dbReference type="GO" id="GO:0005829">
    <property type="term" value="C:cytosol"/>
    <property type="evidence" value="ECO:0007669"/>
    <property type="project" value="TreeGrafter"/>
</dbReference>
<dbReference type="GO" id="GO:0009011">
    <property type="term" value="F:alpha-1,4-glucan glucosyltransferase (ADP-glucose donor) activity"/>
    <property type="evidence" value="ECO:0007669"/>
    <property type="project" value="UniProtKB-UniRule"/>
</dbReference>
<dbReference type="GO" id="GO:0004373">
    <property type="term" value="F:alpha-1,4-glucan glucosyltransferase (UDP-glucose donor) activity"/>
    <property type="evidence" value="ECO:0007669"/>
    <property type="project" value="InterPro"/>
</dbReference>
<dbReference type="GO" id="GO:0005978">
    <property type="term" value="P:glycogen biosynthetic process"/>
    <property type="evidence" value="ECO:0007669"/>
    <property type="project" value="UniProtKB-UniRule"/>
</dbReference>
<dbReference type="CDD" id="cd03791">
    <property type="entry name" value="GT5_Glycogen_synthase_DULL1-like"/>
    <property type="match status" value="1"/>
</dbReference>
<dbReference type="Gene3D" id="3.40.50.2000">
    <property type="entry name" value="Glycogen Phosphorylase B"/>
    <property type="match status" value="2"/>
</dbReference>
<dbReference type="HAMAP" id="MF_00484">
    <property type="entry name" value="Glycogen_synth"/>
    <property type="match status" value="1"/>
</dbReference>
<dbReference type="InterPro" id="IPR001296">
    <property type="entry name" value="Glyco_trans_1"/>
</dbReference>
<dbReference type="InterPro" id="IPR011835">
    <property type="entry name" value="GS/SS"/>
</dbReference>
<dbReference type="InterPro" id="IPR013534">
    <property type="entry name" value="Starch_synth_cat_dom"/>
</dbReference>
<dbReference type="NCBIfam" id="TIGR02095">
    <property type="entry name" value="glgA"/>
    <property type="match status" value="1"/>
</dbReference>
<dbReference type="NCBIfam" id="NF001899">
    <property type="entry name" value="PRK00654.1-2"/>
    <property type="match status" value="1"/>
</dbReference>
<dbReference type="PANTHER" id="PTHR45825:SF11">
    <property type="entry name" value="ALPHA AMYLASE DOMAIN-CONTAINING PROTEIN"/>
    <property type="match status" value="1"/>
</dbReference>
<dbReference type="PANTHER" id="PTHR45825">
    <property type="entry name" value="GRANULE-BOUND STARCH SYNTHASE 1, CHLOROPLASTIC/AMYLOPLASTIC"/>
    <property type="match status" value="1"/>
</dbReference>
<dbReference type="Pfam" id="PF08323">
    <property type="entry name" value="Glyco_transf_5"/>
    <property type="match status" value="1"/>
</dbReference>
<dbReference type="Pfam" id="PF00534">
    <property type="entry name" value="Glycos_transf_1"/>
    <property type="match status" value="1"/>
</dbReference>
<dbReference type="SUPFAM" id="SSF53756">
    <property type="entry name" value="UDP-Glycosyltransferase/glycogen phosphorylase"/>
    <property type="match status" value="1"/>
</dbReference>
<comment type="function">
    <text evidence="1">Synthesizes alpha-1,4-glucan chains using ADP-glucose.</text>
</comment>
<comment type="catalytic activity">
    <reaction evidence="1">
        <text>[(1-&gt;4)-alpha-D-glucosyl](n) + ADP-alpha-D-glucose = [(1-&gt;4)-alpha-D-glucosyl](n+1) + ADP + H(+)</text>
        <dbReference type="Rhea" id="RHEA:18189"/>
        <dbReference type="Rhea" id="RHEA-COMP:9584"/>
        <dbReference type="Rhea" id="RHEA-COMP:9587"/>
        <dbReference type="ChEBI" id="CHEBI:15378"/>
        <dbReference type="ChEBI" id="CHEBI:15444"/>
        <dbReference type="ChEBI" id="CHEBI:57498"/>
        <dbReference type="ChEBI" id="CHEBI:456216"/>
        <dbReference type="EC" id="2.4.1.21"/>
    </reaction>
</comment>
<comment type="pathway">
    <text evidence="1">Glycan biosynthesis; glycogen biosynthesis.</text>
</comment>
<comment type="similarity">
    <text evidence="1">Belongs to the glycosyltransferase 1 family. Bacterial/plant glycogen synthase subfamily.</text>
</comment>
<keyword id="KW-0320">Glycogen biosynthesis</keyword>
<keyword id="KW-0328">Glycosyltransferase</keyword>
<keyword id="KW-0808">Transferase</keyword>
<organism>
    <name type="scientific">Hydrogenovibrio crunogenus (strain DSM 25203 / XCL-2)</name>
    <name type="common">Thiomicrospira crunogena</name>
    <dbReference type="NCBI Taxonomy" id="317025"/>
    <lineage>
        <taxon>Bacteria</taxon>
        <taxon>Pseudomonadati</taxon>
        <taxon>Pseudomonadota</taxon>
        <taxon>Gammaproteobacteria</taxon>
        <taxon>Thiotrichales</taxon>
        <taxon>Piscirickettsiaceae</taxon>
        <taxon>Hydrogenovibrio</taxon>
    </lineage>
</organism>
<sequence>MKILFATSEAHPLIKTGGLADVSGSLPDAYHHLKQKVRMVMPAYGDIWEKVSGVKQLSELSIAACGRQLHVRIHVASAEGIDVPIWLVDIPELFHRPGNPYLALDGKDWWDNGERFAVFSKVVAEIAMNRAGLKWQPDLVQTNDWQTGLVSALLTLEAERPKTVFTIHNMAYAGLFPKSLFEGLGLPWSWWEPHDGIEFYDNMSMLKAGIQMADWVTTVSPTYAKEITFPEYAYGLEGVLIKRLDEGRLVGILNGIDHDVWNPKTDPFIRYHYSVDKGRVAAKKRNKKDMLDFWDLPKAVVDADDPVIGLVGRLVPQKGIDLVLEVLPELIEQTNVRFVIVGTGDSLFEYQLTELAHQYPERLMIYIGYSESLAHKVEAGADLFLMPSRFEPCGLNQLYSLAYGTPPIVHSTGGLSDTVVNATKENLATGQATGFVFYDPSRHALKSTILHALHLFSKKGTWQKLQKNGMRQDFSWTRSAKQYLALFKAMV</sequence>
<feature type="chain" id="PRO_0000230270" description="Glycogen synthase">
    <location>
        <begin position="1"/>
        <end position="491"/>
    </location>
</feature>
<feature type="binding site" evidence="1">
    <location>
        <position position="15"/>
    </location>
    <ligand>
        <name>ADP-alpha-D-glucose</name>
        <dbReference type="ChEBI" id="CHEBI:57498"/>
    </ligand>
</feature>
<protein>
    <recommendedName>
        <fullName evidence="1">Glycogen synthase</fullName>
        <ecNumber evidence="1">2.4.1.21</ecNumber>
    </recommendedName>
    <alternativeName>
        <fullName evidence="1">Starch [bacterial glycogen] synthase</fullName>
    </alternativeName>
</protein>
<reference key="1">
    <citation type="journal article" date="2006" name="PLoS Biol.">
        <title>The genome of deep-sea vent chemolithoautotroph Thiomicrospira crunogena XCL-2.</title>
        <authorList>
            <person name="Scott K.M."/>
            <person name="Sievert S.M."/>
            <person name="Abril F.N."/>
            <person name="Ball L.A."/>
            <person name="Barrett C.J."/>
            <person name="Blake R.A."/>
            <person name="Boller A.J."/>
            <person name="Chain P.S.G."/>
            <person name="Clark J.A."/>
            <person name="Davis C.R."/>
            <person name="Detter C."/>
            <person name="Do K.F."/>
            <person name="Dobrinski K.P."/>
            <person name="Faza B.I."/>
            <person name="Fitzpatrick K.A."/>
            <person name="Freyermuth S.K."/>
            <person name="Harmer T.L."/>
            <person name="Hauser L.J."/>
            <person name="Huegler M."/>
            <person name="Kerfeld C.A."/>
            <person name="Klotz M.G."/>
            <person name="Kong W.W."/>
            <person name="Land M."/>
            <person name="Lapidus A."/>
            <person name="Larimer F.W."/>
            <person name="Longo D.L."/>
            <person name="Lucas S."/>
            <person name="Malfatti S.A."/>
            <person name="Massey S.E."/>
            <person name="Martin D.D."/>
            <person name="McCuddin Z."/>
            <person name="Meyer F."/>
            <person name="Moore J.L."/>
            <person name="Ocampo L.H. Jr."/>
            <person name="Paul J.H."/>
            <person name="Paulsen I.T."/>
            <person name="Reep D.K."/>
            <person name="Ren Q."/>
            <person name="Ross R.L."/>
            <person name="Sato P.Y."/>
            <person name="Thomas P."/>
            <person name="Tinkham L.E."/>
            <person name="Zeruth G.T."/>
        </authorList>
    </citation>
    <scope>NUCLEOTIDE SEQUENCE [LARGE SCALE GENOMIC DNA]</scope>
    <source>
        <strain>DSM 25203 / XCL-2</strain>
    </source>
</reference>
<accession>Q31IB5</accession>